<protein>
    <recommendedName>
        <fullName>L-lactate dehydrogenase B chain</fullName>
        <shortName>LDH-B</shortName>
        <ecNumber evidence="2">1.1.1.27</ecNumber>
    </recommendedName>
</protein>
<proteinExistence type="evidence at protein level"/>
<name>LDHB_CHICK</name>
<sequence>MATLKEKLITPVAAGSTVPSNKITVVGVGQVGMACAISILGKGLCDELALVDVLEDKLKGEMMDLQHGSLFLQTHKIVADKDYAVTANSKIVVVTAGVRQQEGESRLNLVQRNVNVFKFIIPQIVKYSPNCTILVVSNPVDILTYVTWKLSGLPKHRVIGSGCNLDTARFRYLMAERLGIHPTSCHGWILGEHGDSSVAVWSGVNVAGVSLQELNPAMGTDKDSENWKEVHKQVVESAYEVIRLKGYTNWAIGLSVAELCETMLKNLYRVHSVSTLVKGTYGIENDVFLSLPCVLSASGLTSVINQKLKDDEVAQLKKSADTLWSIQKDLKDL</sequence>
<accession>P00337</accession>
<accession>O93362</accession>
<accession>Q548X0</accession>
<comment type="function">
    <text evidence="2">Interconverts simultaneously and stereospecifically pyruvate and lactate with concomitant interconversion of NADH and NAD(+).</text>
</comment>
<comment type="catalytic activity">
    <reaction evidence="2">
        <text>(S)-lactate + NAD(+) = pyruvate + NADH + H(+)</text>
        <dbReference type="Rhea" id="RHEA:23444"/>
        <dbReference type="ChEBI" id="CHEBI:15361"/>
        <dbReference type="ChEBI" id="CHEBI:15378"/>
        <dbReference type="ChEBI" id="CHEBI:16651"/>
        <dbReference type="ChEBI" id="CHEBI:57540"/>
        <dbReference type="ChEBI" id="CHEBI:57945"/>
        <dbReference type="EC" id="1.1.1.27"/>
    </reaction>
    <physiologicalReaction direction="left-to-right" evidence="2">
        <dbReference type="Rhea" id="RHEA:23445"/>
    </physiologicalReaction>
    <physiologicalReaction direction="right-to-left" evidence="2">
        <dbReference type="Rhea" id="RHEA:23446"/>
    </physiologicalReaction>
</comment>
<comment type="pathway">
    <text evidence="2">Fermentation; pyruvate fermentation to lactate; (S)-lactate from pyruvate: step 1/1.</text>
</comment>
<comment type="subunit">
    <text>Homotetramer.</text>
</comment>
<comment type="subcellular location">
    <subcellularLocation>
        <location evidence="1">Cytoplasm</location>
    </subcellularLocation>
</comment>
<comment type="similarity">
    <text evidence="3">Belongs to the LDH/MDH superfamily. LDH family.</text>
</comment>
<feature type="initiator methionine" description="Removed" evidence="1">
    <location>
        <position position="1"/>
    </location>
</feature>
<feature type="chain" id="PRO_0000168466" description="L-lactate dehydrogenase B chain">
    <location>
        <begin position="2"/>
        <end position="333"/>
    </location>
</feature>
<feature type="active site" description="Proton acceptor" evidence="1">
    <location>
        <position position="193"/>
    </location>
</feature>
<feature type="binding site" evidence="1">
    <location>
        <begin position="29"/>
        <end position="57"/>
    </location>
    <ligand>
        <name>NAD(+)</name>
        <dbReference type="ChEBI" id="CHEBI:57540"/>
    </ligand>
</feature>
<feature type="binding site" evidence="1">
    <location>
        <position position="99"/>
    </location>
    <ligand>
        <name>NAD(+)</name>
        <dbReference type="ChEBI" id="CHEBI:57540"/>
    </ligand>
</feature>
<feature type="binding site" evidence="1">
    <location>
        <position position="106"/>
    </location>
    <ligand>
        <name>substrate</name>
    </ligand>
</feature>
<feature type="binding site" evidence="1">
    <location>
        <position position="138"/>
    </location>
    <ligand>
        <name>NAD(+)</name>
        <dbReference type="ChEBI" id="CHEBI:57540"/>
    </ligand>
</feature>
<feature type="binding site" evidence="1">
    <location>
        <position position="138"/>
    </location>
    <ligand>
        <name>substrate</name>
    </ligand>
</feature>
<feature type="binding site" evidence="1">
    <location>
        <position position="169"/>
    </location>
    <ligand>
        <name>substrate</name>
    </ligand>
</feature>
<feature type="binding site" evidence="1">
    <location>
        <position position="248"/>
    </location>
    <ligand>
        <name>substrate</name>
    </ligand>
</feature>
<feature type="sequence conflict" description="In Ref. 3; AA sequence." evidence="3" ref="3">
    <original>T</original>
    <variation>V</variation>
    <location>
        <position position="132"/>
    </location>
</feature>
<feature type="sequence conflict" description="In Ref. 3; AA sequence." evidence="3" ref="3">
    <original>ELN</original>
    <variation>QLD</variation>
    <location>
        <begin position="213"/>
        <end position="215"/>
    </location>
</feature>
<feature type="helix" evidence="4">
    <location>
        <begin position="4"/>
        <end position="8"/>
    </location>
</feature>
<feature type="strand" evidence="4">
    <location>
        <begin position="9"/>
        <end position="11"/>
    </location>
</feature>
<feature type="strand" evidence="4">
    <location>
        <begin position="23"/>
        <end position="26"/>
    </location>
</feature>
<feature type="helix" evidence="4">
    <location>
        <begin position="32"/>
        <end position="41"/>
    </location>
</feature>
<feature type="strand" evidence="4">
    <location>
        <begin position="46"/>
        <end position="51"/>
    </location>
</feature>
<feature type="helix" evidence="4">
    <location>
        <begin position="56"/>
        <end position="66"/>
    </location>
</feature>
<feature type="helix" evidence="4">
    <location>
        <begin position="67"/>
        <end position="71"/>
    </location>
</feature>
<feature type="strand" evidence="4">
    <location>
        <begin position="76"/>
        <end position="79"/>
    </location>
</feature>
<feature type="turn" evidence="4">
    <location>
        <begin position="83"/>
        <end position="88"/>
    </location>
</feature>
<feature type="strand" evidence="4">
    <location>
        <begin position="90"/>
        <end position="94"/>
    </location>
</feature>
<feature type="helix" evidence="4">
    <location>
        <begin position="110"/>
        <end position="127"/>
    </location>
</feature>
<feature type="strand" evidence="4">
    <location>
        <begin position="132"/>
        <end position="135"/>
    </location>
</feature>
<feature type="strand" evidence="4">
    <location>
        <begin position="137"/>
        <end position="139"/>
    </location>
</feature>
<feature type="helix" evidence="4">
    <location>
        <begin position="140"/>
        <end position="149"/>
    </location>
</feature>
<feature type="helix" evidence="4">
    <location>
        <begin position="155"/>
        <end position="157"/>
    </location>
</feature>
<feature type="strand" evidence="4">
    <location>
        <begin position="158"/>
        <end position="160"/>
    </location>
</feature>
<feature type="helix" evidence="4">
    <location>
        <begin position="164"/>
        <end position="176"/>
    </location>
</feature>
<feature type="turn" evidence="4">
    <location>
        <begin position="177"/>
        <end position="179"/>
    </location>
</feature>
<feature type="turn" evidence="4">
    <location>
        <begin position="182"/>
        <end position="184"/>
    </location>
</feature>
<feature type="strand" evidence="4">
    <location>
        <begin position="185"/>
        <end position="191"/>
    </location>
</feature>
<feature type="strand" evidence="4">
    <location>
        <begin position="197"/>
        <end position="206"/>
    </location>
</feature>
<feature type="helix" evidence="4">
    <location>
        <begin position="211"/>
        <end position="214"/>
    </location>
</feature>
<feature type="turn" evidence="4">
    <location>
        <begin position="216"/>
        <end position="219"/>
    </location>
</feature>
<feature type="helix" evidence="4">
    <location>
        <begin position="228"/>
        <end position="245"/>
    </location>
</feature>
<feature type="helix" evidence="4">
    <location>
        <begin position="250"/>
        <end position="264"/>
    </location>
</feature>
<feature type="strand" evidence="4">
    <location>
        <begin position="269"/>
        <end position="276"/>
    </location>
</feature>
<feature type="strand" evidence="4">
    <location>
        <begin position="280"/>
        <end position="282"/>
    </location>
</feature>
<feature type="strand" evidence="4">
    <location>
        <begin position="288"/>
        <end position="295"/>
    </location>
</feature>
<feature type="strand" evidence="4">
    <location>
        <begin position="297"/>
        <end position="304"/>
    </location>
</feature>
<feature type="helix" evidence="4">
    <location>
        <begin position="310"/>
        <end position="327"/>
    </location>
</feature>
<reference key="1">
    <citation type="submission" date="1998-06" db="EMBL/GenBank/DDBJ databases">
        <title>Molecular evolution of vertebrate lactate dehydrogenase isozymes by gene duplication.</title>
        <authorList>
            <person name="Tsoi S.C.-M."/>
            <person name="Li J.Y."/>
            <person name="Mannen H."/>
            <person name="Li S.S.-L."/>
        </authorList>
    </citation>
    <scope>NUCLEOTIDE SEQUENCE [MRNA]</scope>
    <source>
        <strain>Broiler</strain>
        <tissue>Heart</tissue>
    </source>
</reference>
<reference key="2">
    <citation type="submission" date="1999-12" db="EMBL/GenBank/DDBJ databases">
        <title>Expression of lactate dehydrogenases A and B during chicken spermatogenesis: characterization of testis specific transcripts.</title>
        <authorList>
            <person name="Martinez-Arias W."/>
            <person name="Mezquita C."/>
            <person name="Mezquita J."/>
        </authorList>
    </citation>
    <scope>NUCLEOTIDE SEQUENCE [MRNA]</scope>
    <source>
        <tissue>Testis</tissue>
    </source>
</reference>
<reference key="3">
    <citation type="book" date="1977" name="Pyridine nucleotide dependent dehydrogenases">
        <editorList>
            <person name="Sund H."/>
        </editorList>
        <authorList>
            <person name="Torff H.-J."/>
            <person name="Becker D."/>
            <person name="Schwarzwalder J."/>
        </authorList>
    </citation>
    <scope>PROTEIN SEQUENCE OF 2-333</scope>
</reference>
<evidence type="ECO:0000250" key="1"/>
<evidence type="ECO:0000250" key="2">
    <source>
        <dbReference type="UniProtKB" id="P07195"/>
    </source>
</evidence>
<evidence type="ECO:0000305" key="3"/>
<evidence type="ECO:0007829" key="4">
    <source>
        <dbReference type="PDB" id="5K0Z"/>
    </source>
</evidence>
<keyword id="KW-0002">3D-structure</keyword>
<keyword id="KW-0963">Cytoplasm</keyword>
<keyword id="KW-0903">Direct protein sequencing</keyword>
<keyword id="KW-0520">NAD</keyword>
<keyword id="KW-0560">Oxidoreductase</keyword>
<keyword id="KW-1185">Reference proteome</keyword>
<organism>
    <name type="scientific">Gallus gallus</name>
    <name type="common">Chicken</name>
    <dbReference type="NCBI Taxonomy" id="9031"/>
    <lineage>
        <taxon>Eukaryota</taxon>
        <taxon>Metazoa</taxon>
        <taxon>Chordata</taxon>
        <taxon>Craniata</taxon>
        <taxon>Vertebrata</taxon>
        <taxon>Euteleostomi</taxon>
        <taxon>Archelosauria</taxon>
        <taxon>Archosauria</taxon>
        <taxon>Dinosauria</taxon>
        <taxon>Saurischia</taxon>
        <taxon>Theropoda</taxon>
        <taxon>Coelurosauria</taxon>
        <taxon>Aves</taxon>
        <taxon>Neognathae</taxon>
        <taxon>Galloanserae</taxon>
        <taxon>Galliformes</taxon>
        <taxon>Phasianidae</taxon>
        <taxon>Phasianinae</taxon>
        <taxon>Gallus</taxon>
    </lineage>
</organism>
<gene>
    <name type="primary">LDHB</name>
</gene>
<dbReference type="EC" id="1.1.1.27" evidence="2"/>
<dbReference type="EMBL" id="AF069771">
    <property type="protein sequence ID" value="AAC27617.1"/>
    <property type="molecule type" value="mRNA"/>
</dbReference>
<dbReference type="EMBL" id="AF218799">
    <property type="protein sequence ID" value="AAG48560.1"/>
    <property type="molecule type" value="mRNA"/>
</dbReference>
<dbReference type="PIR" id="A00346">
    <property type="entry name" value="DECHLH"/>
</dbReference>
<dbReference type="RefSeq" id="NP_989508.1">
    <property type="nucleotide sequence ID" value="NM_204177.3"/>
</dbReference>
<dbReference type="RefSeq" id="XP_040554065.1">
    <property type="nucleotide sequence ID" value="XM_040698131.2"/>
</dbReference>
<dbReference type="PDB" id="5K0Z">
    <property type="method" value="EM"/>
    <property type="resolution" value="2.80 A"/>
    <property type="chains" value="A/B/C/D=2-332"/>
</dbReference>
<dbReference type="PDBsum" id="5K0Z"/>
<dbReference type="EMDB" id="EMD-8191"/>
<dbReference type="SMR" id="P00337"/>
<dbReference type="BioGRID" id="675043">
    <property type="interactions" value="2"/>
</dbReference>
<dbReference type="FunCoup" id="P00337">
    <property type="interactions" value="1615"/>
</dbReference>
<dbReference type="IntAct" id="P00337">
    <property type="interactions" value="1"/>
</dbReference>
<dbReference type="STRING" id="9031.ENSGALP00000049441"/>
<dbReference type="PaxDb" id="9031-ENSGALP00000041792"/>
<dbReference type="Ensembl" id="ENSGALT00010031643.1">
    <property type="protein sequence ID" value="ENSGALP00010018507.1"/>
    <property type="gene ID" value="ENSGALG00010013184.1"/>
</dbReference>
<dbReference type="GeneID" id="373997"/>
<dbReference type="KEGG" id="gga:373997"/>
<dbReference type="CTD" id="3945"/>
<dbReference type="VEuPathDB" id="HostDB:geneid_373997"/>
<dbReference type="eggNOG" id="KOG1495">
    <property type="taxonomic scope" value="Eukaryota"/>
</dbReference>
<dbReference type="GeneTree" id="ENSGT00940000153525"/>
<dbReference type="HOGENOM" id="CLU_045401_0_2_1"/>
<dbReference type="InParanoid" id="P00337"/>
<dbReference type="OMA" id="EGQYGHK"/>
<dbReference type="OrthoDB" id="5405561at2759"/>
<dbReference type="PhylomeDB" id="P00337"/>
<dbReference type="TreeFam" id="TF314963"/>
<dbReference type="Reactome" id="R-GGA-373920">
    <property type="pathway name" value="Pyruvate metabolism"/>
</dbReference>
<dbReference type="Reactome" id="R-GGA-70268">
    <property type="pathway name" value="Pyruvate metabolism"/>
</dbReference>
<dbReference type="SABIO-RK" id="P00337"/>
<dbReference type="UniPathway" id="UPA00554">
    <property type="reaction ID" value="UER00611"/>
</dbReference>
<dbReference type="PRO" id="PR:P00337"/>
<dbReference type="Proteomes" id="UP000000539">
    <property type="component" value="Chromosome 1"/>
</dbReference>
<dbReference type="Bgee" id="ENSGALG00000035836">
    <property type="expression patterns" value="Expressed in testis and 12 other cell types or tissues"/>
</dbReference>
<dbReference type="GO" id="GO:0005829">
    <property type="term" value="C:cytosol"/>
    <property type="evidence" value="ECO:0000304"/>
    <property type="project" value="Reactome"/>
</dbReference>
<dbReference type="GO" id="GO:0045121">
    <property type="term" value="C:membrane raft"/>
    <property type="evidence" value="ECO:0007669"/>
    <property type="project" value="Ensembl"/>
</dbReference>
<dbReference type="GO" id="GO:0005743">
    <property type="term" value="C:mitochondrial inner membrane"/>
    <property type="evidence" value="ECO:0007669"/>
    <property type="project" value="Ensembl"/>
</dbReference>
<dbReference type="GO" id="GO:0005739">
    <property type="term" value="C:mitochondrion"/>
    <property type="evidence" value="ECO:0000318"/>
    <property type="project" value="GO_Central"/>
</dbReference>
<dbReference type="GO" id="GO:1990204">
    <property type="term" value="C:oxidoreductase complex"/>
    <property type="evidence" value="ECO:0007669"/>
    <property type="project" value="Ensembl"/>
</dbReference>
<dbReference type="GO" id="GO:0042802">
    <property type="term" value="F:identical protein binding"/>
    <property type="evidence" value="ECO:0007669"/>
    <property type="project" value="Ensembl"/>
</dbReference>
<dbReference type="GO" id="GO:0004459">
    <property type="term" value="F:L-lactate dehydrogenase activity"/>
    <property type="evidence" value="ECO:0000318"/>
    <property type="project" value="GO_Central"/>
</dbReference>
<dbReference type="GO" id="GO:0006089">
    <property type="term" value="P:lactate metabolic process"/>
    <property type="evidence" value="ECO:0000318"/>
    <property type="project" value="GO_Central"/>
</dbReference>
<dbReference type="GO" id="GO:0006090">
    <property type="term" value="P:pyruvate metabolic process"/>
    <property type="evidence" value="ECO:0000318"/>
    <property type="project" value="GO_Central"/>
</dbReference>
<dbReference type="CDD" id="cd05293">
    <property type="entry name" value="LDH_1"/>
    <property type="match status" value="1"/>
</dbReference>
<dbReference type="FunFam" id="3.40.50.720:FF:000029">
    <property type="entry name" value="L-lactate dehydrogenase A chain"/>
    <property type="match status" value="1"/>
</dbReference>
<dbReference type="FunFam" id="3.90.110.10:FF:000003">
    <property type="entry name" value="L-lactate dehydrogenase A chain"/>
    <property type="match status" value="1"/>
</dbReference>
<dbReference type="Gene3D" id="3.90.110.10">
    <property type="entry name" value="Lactate dehydrogenase/glycoside hydrolase, family 4, C-terminal"/>
    <property type="match status" value="1"/>
</dbReference>
<dbReference type="Gene3D" id="3.40.50.720">
    <property type="entry name" value="NAD(P)-binding Rossmann-like Domain"/>
    <property type="match status" value="1"/>
</dbReference>
<dbReference type="HAMAP" id="MF_00488">
    <property type="entry name" value="Lactate_dehydrog"/>
    <property type="match status" value="1"/>
</dbReference>
<dbReference type="InterPro" id="IPR001557">
    <property type="entry name" value="L-lactate/malate_DH"/>
</dbReference>
<dbReference type="InterPro" id="IPR011304">
    <property type="entry name" value="L-lactate_DH"/>
</dbReference>
<dbReference type="InterPro" id="IPR018177">
    <property type="entry name" value="L-lactate_DH_AS"/>
</dbReference>
<dbReference type="InterPro" id="IPR022383">
    <property type="entry name" value="Lactate/malate_DH_C"/>
</dbReference>
<dbReference type="InterPro" id="IPR001236">
    <property type="entry name" value="Lactate/malate_DH_N"/>
</dbReference>
<dbReference type="InterPro" id="IPR015955">
    <property type="entry name" value="Lactate_DH/Glyco_Ohase_4_C"/>
</dbReference>
<dbReference type="InterPro" id="IPR036291">
    <property type="entry name" value="NAD(P)-bd_dom_sf"/>
</dbReference>
<dbReference type="NCBIfam" id="TIGR01771">
    <property type="entry name" value="L-LDH-NAD"/>
    <property type="match status" value="1"/>
</dbReference>
<dbReference type="NCBIfam" id="NF000824">
    <property type="entry name" value="PRK00066.1"/>
    <property type="match status" value="1"/>
</dbReference>
<dbReference type="PANTHER" id="PTHR43128">
    <property type="entry name" value="L-2-HYDROXYCARBOXYLATE DEHYDROGENASE (NAD(P)(+))"/>
    <property type="match status" value="1"/>
</dbReference>
<dbReference type="PANTHER" id="PTHR43128:SF2">
    <property type="entry name" value="L-LACTATE DEHYDROGENASE B CHAIN"/>
    <property type="match status" value="1"/>
</dbReference>
<dbReference type="Pfam" id="PF02866">
    <property type="entry name" value="Ldh_1_C"/>
    <property type="match status" value="1"/>
</dbReference>
<dbReference type="Pfam" id="PF00056">
    <property type="entry name" value="Ldh_1_N"/>
    <property type="match status" value="1"/>
</dbReference>
<dbReference type="PIRSF" id="PIRSF000102">
    <property type="entry name" value="Lac_mal_DH"/>
    <property type="match status" value="1"/>
</dbReference>
<dbReference type="PRINTS" id="PR00086">
    <property type="entry name" value="LLDHDRGNASE"/>
</dbReference>
<dbReference type="SUPFAM" id="SSF56327">
    <property type="entry name" value="LDH C-terminal domain-like"/>
    <property type="match status" value="1"/>
</dbReference>
<dbReference type="SUPFAM" id="SSF51735">
    <property type="entry name" value="NAD(P)-binding Rossmann-fold domains"/>
    <property type="match status" value="1"/>
</dbReference>
<dbReference type="PROSITE" id="PS00064">
    <property type="entry name" value="L_LDH"/>
    <property type="match status" value="1"/>
</dbReference>